<sequence>MSAASLYPVRPEVAATTLTDEATYKAMYQQSVVNPDGFWREQAQRLDWIKPFSVVKQTSFDDHRVDIKWFADGTLNVAYNCLDRHLAERGDTIAIIWEGDNPSEHREITYRELHAEVCKFANALRGQDVHRGDVVTIYMPMIPEAVVAMLACARIGAIHSVVFGGFSPEALAGRIIDCSSKVVITADEGLRGGKKTALKANVDRALTNPETSSVQKVIVCKRTGGEIEWNRHRDIWYHSLLEVASSTCAPKEMGAEESLFILYTSGSTGKPKGVLHTTAGYLLYAALTHERVFDYKPGEIYWCTADVGWVTGHSYIVYGPLANGATTLLFEGVPNYPDITRVSKIIDKHKVNILYTAPTAIRAMMAEGTKSVEGADGSSLRLLGSVGEPINPEAWGWYYNTVGKQNCPIVDTWWQTETGGILISPLPGATALKPGSATRPFFGVIPALVDNLGNLIEGAAEGNLVILDSWPGQSRSLYGDHDRFVDTYFKTFRGMYFTGDGARRDEDGYYWITGRVDDVLNVSGHRMGTAEIESAMVAHPKVAEAAVVGVPHDLKGQGIYVYVTLNGGEEPSDALRTELRNWVRKEIGPIASPDFIQWAPGLPKTRSGKIMRRILRKIATAEYDALGDISTLADPGVVQHLIDTHKTMNAA</sequence>
<evidence type="ECO:0000255" key="1">
    <source>
        <dbReference type="HAMAP-Rule" id="MF_01123"/>
    </source>
</evidence>
<reference key="1">
    <citation type="journal article" date="2005" name="J. Bacteriol.">
        <title>Whole-genome sequence analysis of Pseudomonas syringae pv. phaseolicola 1448A reveals divergence among pathovars in genes involved in virulence and transposition.</title>
        <authorList>
            <person name="Joardar V."/>
            <person name="Lindeberg M."/>
            <person name="Jackson R.W."/>
            <person name="Selengut J."/>
            <person name="Dodson R."/>
            <person name="Brinkac L.M."/>
            <person name="Daugherty S.C."/>
            <person name="DeBoy R.T."/>
            <person name="Durkin A.S."/>
            <person name="Gwinn Giglio M."/>
            <person name="Madupu R."/>
            <person name="Nelson W.C."/>
            <person name="Rosovitz M.J."/>
            <person name="Sullivan S.A."/>
            <person name="Crabtree J."/>
            <person name="Creasy T."/>
            <person name="Davidsen T.M."/>
            <person name="Haft D.H."/>
            <person name="Zafar N."/>
            <person name="Zhou L."/>
            <person name="Halpin R."/>
            <person name="Holley T."/>
            <person name="Khouri H.M."/>
            <person name="Feldblyum T.V."/>
            <person name="White O."/>
            <person name="Fraser C.M."/>
            <person name="Chatterjee A.K."/>
            <person name="Cartinhour S."/>
            <person name="Schneider D."/>
            <person name="Mansfield J.W."/>
            <person name="Collmer A."/>
            <person name="Buell R."/>
        </authorList>
    </citation>
    <scope>NUCLEOTIDE SEQUENCE [LARGE SCALE GENOMIC DNA]</scope>
    <source>
        <strain>1448A / Race 6</strain>
    </source>
</reference>
<comment type="function">
    <text evidence="1">Catalyzes the conversion of acetate into acetyl-CoA (AcCoA), an essential intermediate at the junction of anabolic and catabolic pathways. AcsA undergoes a two-step reaction. In the first half reaction, AcsA combines acetate with ATP to form acetyl-adenylate (AcAMP) intermediate. In the second half reaction, it can then transfer the acetyl group from AcAMP to the sulfhydryl group of CoA, forming the product AcCoA.</text>
</comment>
<comment type="catalytic activity">
    <reaction evidence="1">
        <text>acetate + ATP + CoA = acetyl-CoA + AMP + diphosphate</text>
        <dbReference type="Rhea" id="RHEA:23176"/>
        <dbReference type="ChEBI" id="CHEBI:30089"/>
        <dbReference type="ChEBI" id="CHEBI:30616"/>
        <dbReference type="ChEBI" id="CHEBI:33019"/>
        <dbReference type="ChEBI" id="CHEBI:57287"/>
        <dbReference type="ChEBI" id="CHEBI:57288"/>
        <dbReference type="ChEBI" id="CHEBI:456215"/>
        <dbReference type="EC" id="6.2.1.1"/>
    </reaction>
</comment>
<comment type="cofactor">
    <cofactor evidence="1">
        <name>Mg(2+)</name>
        <dbReference type="ChEBI" id="CHEBI:18420"/>
    </cofactor>
</comment>
<comment type="PTM">
    <text evidence="1">Acetylated. Deacetylation by the SIR2-homolog deacetylase activates the enzyme.</text>
</comment>
<comment type="similarity">
    <text evidence="1">Belongs to the ATP-dependent AMP-binding enzyme family.</text>
</comment>
<feature type="chain" id="PRO_1000065303" description="Acetyl-coenzyme A synthetase">
    <location>
        <begin position="1"/>
        <end position="651"/>
    </location>
</feature>
<feature type="binding site" evidence="1">
    <location>
        <begin position="191"/>
        <end position="194"/>
    </location>
    <ligand>
        <name>CoA</name>
        <dbReference type="ChEBI" id="CHEBI:57287"/>
    </ligand>
</feature>
<feature type="binding site" evidence="1">
    <location>
        <position position="311"/>
    </location>
    <ligand>
        <name>CoA</name>
        <dbReference type="ChEBI" id="CHEBI:57287"/>
    </ligand>
</feature>
<feature type="binding site" evidence="1">
    <location>
        <position position="335"/>
    </location>
    <ligand>
        <name>CoA</name>
        <dbReference type="ChEBI" id="CHEBI:57287"/>
    </ligand>
</feature>
<feature type="binding site" evidence="1">
    <location>
        <begin position="387"/>
        <end position="389"/>
    </location>
    <ligand>
        <name>ATP</name>
        <dbReference type="ChEBI" id="CHEBI:30616"/>
    </ligand>
</feature>
<feature type="binding site" evidence="1">
    <location>
        <begin position="411"/>
        <end position="416"/>
    </location>
    <ligand>
        <name>ATP</name>
        <dbReference type="ChEBI" id="CHEBI:30616"/>
    </ligand>
</feature>
<feature type="binding site" evidence="1">
    <location>
        <position position="500"/>
    </location>
    <ligand>
        <name>ATP</name>
        <dbReference type="ChEBI" id="CHEBI:30616"/>
    </ligand>
</feature>
<feature type="binding site" evidence="1">
    <location>
        <position position="515"/>
    </location>
    <ligand>
        <name>ATP</name>
        <dbReference type="ChEBI" id="CHEBI:30616"/>
    </ligand>
</feature>
<feature type="binding site" evidence="1">
    <location>
        <position position="523"/>
    </location>
    <ligand>
        <name>CoA</name>
        <dbReference type="ChEBI" id="CHEBI:57287"/>
    </ligand>
</feature>
<feature type="binding site" evidence="1">
    <location>
        <position position="526"/>
    </location>
    <ligand>
        <name>ATP</name>
        <dbReference type="ChEBI" id="CHEBI:30616"/>
    </ligand>
</feature>
<feature type="binding site" evidence="1">
    <location>
        <position position="537"/>
    </location>
    <ligand>
        <name>Mg(2+)</name>
        <dbReference type="ChEBI" id="CHEBI:18420"/>
    </ligand>
</feature>
<feature type="binding site" evidence="1">
    <location>
        <position position="539"/>
    </location>
    <ligand>
        <name>Mg(2+)</name>
        <dbReference type="ChEBI" id="CHEBI:18420"/>
    </ligand>
</feature>
<feature type="binding site" evidence="1">
    <location>
        <position position="542"/>
    </location>
    <ligand>
        <name>Mg(2+)</name>
        <dbReference type="ChEBI" id="CHEBI:18420"/>
    </ligand>
</feature>
<feature type="binding site" evidence="1">
    <location>
        <position position="584"/>
    </location>
    <ligand>
        <name>CoA</name>
        <dbReference type="ChEBI" id="CHEBI:57287"/>
    </ligand>
</feature>
<feature type="modified residue" description="N6-acetyllysine" evidence="1">
    <location>
        <position position="609"/>
    </location>
</feature>
<dbReference type="EC" id="6.2.1.1" evidence="1"/>
<dbReference type="EMBL" id="CP000058">
    <property type="protein sequence ID" value="AAZ35332.1"/>
    <property type="molecule type" value="Genomic_DNA"/>
</dbReference>
<dbReference type="SMR" id="Q48G09"/>
<dbReference type="KEGG" id="psp:PSPPH_3528"/>
<dbReference type="eggNOG" id="COG0365">
    <property type="taxonomic scope" value="Bacteria"/>
</dbReference>
<dbReference type="HOGENOM" id="CLU_000022_3_6_6"/>
<dbReference type="Proteomes" id="UP000000551">
    <property type="component" value="Chromosome"/>
</dbReference>
<dbReference type="GO" id="GO:0005829">
    <property type="term" value="C:cytosol"/>
    <property type="evidence" value="ECO:0007669"/>
    <property type="project" value="TreeGrafter"/>
</dbReference>
<dbReference type="GO" id="GO:0003987">
    <property type="term" value="F:acetate-CoA ligase activity"/>
    <property type="evidence" value="ECO:0007669"/>
    <property type="project" value="UniProtKB-UniRule"/>
</dbReference>
<dbReference type="GO" id="GO:0016208">
    <property type="term" value="F:AMP binding"/>
    <property type="evidence" value="ECO:0007669"/>
    <property type="project" value="InterPro"/>
</dbReference>
<dbReference type="GO" id="GO:0005524">
    <property type="term" value="F:ATP binding"/>
    <property type="evidence" value="ECO:0007669"/>
    <property type="project" value="UniProtKB-KW"/>
</dbReference>
<dbReference type="GO" id="GO:0046872">
    <property type="term" value="F:metal ion binding"/>
    <property type="evidence" value="ECO:0007669"/>
    <property type="project" value="UniProtKB-KW"/>
</dbReference>
<dbReference type="GO" id="GO:0019427">
    <property type="term" value="P:acetyl-CoA biosynthetic process from acetate"/>
    <property type="evidence" value="ECO:0007669"/>
    <property type="project" value="InterPro"/>
</dbReference>
<dbReference type="CDD" id="cd05966">
    <property type="entry name" value="ACS"/>
    <property type="match status" value="1"/>
</dbReference>
<dbReference type="FunFam" id="3.30.300.30:FF:000004">
    <property type="entry name" value="Acetyl-coenzyme A synthetase"/>
    <property type="match status" value="1"/>
</dbReference>
<dbReference type="FunFam" id="3.40.50.12780:FF:000001">
    <property type="entry name" value="Acetyl-coenzyme A synthetase"/>
    <property type="match status" value="1"/>
</dbReference>
<dbReference type="Gene3D" id="3.30.300.30">
    <property type="match status" value="1"/>
</dbReference>
<dbReference type="Gene3D" id="3.40.50.12780">
    <property type="entry name" value="N-terminal domain of ligase-like"/>
    <property type="match status" value="1"/>
</dbReference>
<dbReference type="HAMAP" id="MF_01123">
    <property type="entry name" value="Ac_CoA_synth"/>
    <property type="match status" value="1"/>
</dbReference>
<dbReference type="InterPro" id="IPR011904">
    <property type="entry name" value="Ac_CoA_lig"/>
</dbReference>
<dbReference type="InterPro" id="IPR032387">
    <property type="entry name" value="ACAS_N"/>
</dbReference>
<dbReference type="InterPro" id="IPR025110">
    <property type="entry name" value="AMP-bd_C"/>
</dbReference>
<dbReference type="InterPro" id="IPR045851">
    <property type="entry name" value="AMP-bd_C_sf"/>
</dbReference>
<dbReference type="InterPro" id="IPR020845">
    <property type="entry name" value="AMP-binding_CS"/>
</dbReference>
<dbReference type="InterPro" id="IPR000873">
    <property type="entry name" value="AMP-dep_synth/lig_dom"/>
</dbReference>
<dbReference type="InterPro" id="IPR042099">
    <property type="entry name" value="ANL_N_sf"/>
</dbReference>
<dbReference type="NCBIfam" id="TIGR02188">
    <property type="entry name" value="Ac_CoA_lig_AcsA"/>
    <property type="match status" value="1"/>
</dbReference>
<dbReference type="NCBIfam" id="NF001208">
    <property type="entry name" value="PRK00174.1"/>
    <property type="match status" value="1"/>
</dbReference>
<dbReference type="PANTHER" id="PTHR24095">
    <property type="entry name" value="ACETYL-COENZYME A SYNTHETASE"/>
    <property type="match status" value="1"/>
</dbReference>
<dbReference type="PANTHER" id="PTHR24095:SF243">
    <property type="entry name" value="ACETYL-COENZYME A SYNTHETASE"/>
    <property type="match status" value="1"/>
</dbReference>
<dbReference type="Pfam" id="PF16177">
    <property type="entry name" value="ACAS_N"/>
    <property type="match status" value="1"/>
</dbReference>
<dbReference type="Pfam" id="PF00501">
    <property type="entry name" value="AMP-binding"/>
    <property type="match status" value="1"/>
</dbReference>
<dbReference type="Pfam" id="PF13193">
    <property type="entry name" value="AMP-binding_C"/>
    <property type="match status" value="1"/>
</dbReference>
<dbReference type="SUPFAM" id="SSF56801">
    <property type="entry name" value="Acetyl-CoA synthetase-like"/>
    <property type="match status" value="1"/>
</dbReference>
<dbReference type="PROSITE" id="PS00455">
    <property type="entry name" value="AMP_BINDING"/>
    <property type="match status" value="1"/>
</dbReference>
<protein>
    <recommendedName>
        <fullName evidence="1">Acetyl-coenzyme A synthetase</fullName>
        <shortName evidence="1">AcCoA synthetase</shortName>
        <shortName evidence="1">Acs</shortName>
        <ecNumber evidence="1">6.2.1.1</ecNumber>
    </recommendedName>
    <alternativeName>
        <fullName evidence="1">Acetate--CoA ligase</fullName>
    </alternativeName>
    <alternativeName>
        <fullName evidence="1">Acyl-activating enzyme</fullName>
    </alternativeName>
</protein>
<accession>Q48G09</accession>
<organism>
    <name type="scientific">Pseudomonas savastanoi pv. phaseolicola (strain 1448A / Race 6)</name>
    <name type="common">Pseudomonas syringae pv. phaseolicola (strain 1448A / Race 6)</name>
    <dbReference type="NCBI Taxonomy" id="264730"/>
    <lineage>
        <taxon>Bacteria</taxon>
        <taxon>Pseudomonadati</taxon>
        <taxon>Pseudomonadota</taxon>
        <taxon>Gammaproteobacteria</taxon>
        <taxon>Pseudomonadales</taxon>
        <taxon>Pseudomonadaceae</taxon>
        <taxon>Pseudomonas</taxon>
    </lineage>
</organism>
<proteinExistence type="inferred from homology"/>
<gene>
    <name evidence="1" type="primary">acsA</name>
    <name type="ordered locus">PSPPH_3528</name>
</gene>
<name>ACSA_PSE14</name>
<keyword id="KW-0007">Acetylation</keyword>
<keyword id="KW-0067">ATP-binding</keyword>
<keyword id="KW-0436">Ligase</keyword>
<keyword id="KW-0460">Magnesium</keyword>
<keyword id="KW-0479">Metal-binding</keyword>
<keyword id="KW-0547">Nucleotide-binding</keyword>